<sequence>MRVDGREKTELRHIHIHTNYLKHPEGSVLIEVGDTKVICSATIEERVPPFMRGEGKGWVTAEYAMIPRATEQRTIRESSKGKVTGRTMEIQRLIGRALRAVVDLEALGERTVWIDCDVIQADGGTRTASITGAYVAMVLAFEKLLQAEKVSKIPVKDYLAATSVGIVEEQGVVLDLNYAEDSKADVDMNVIMTGKGQFVEVQGTGEEATFSRAQLNELLDAAEQGIFQLIDIQKEALGDIVSHIE</sequence>
<name>RNPH_BACC3</name>
<feature type="chain" id="PRO_1000194466" description="Ribonuclease PH">
    <location>
        <begin position="1"/>
        <end position="245"/>
    </location>
</feature>
<feature type="binding site" evidence="1">
    <location>
        <position position="86"/>
    </location>
    <ligand>
        <name>phosphate</name>
        <dbReference type="ChEBI" id="CHEBI:43474"/>
        <note>substrate</note>
    </ligand>
</feature>
<feature type="binding site" evidence="1">
    <location>
        <begin position="124"/>
        <end position="126"/>
    </location>
    <ligand>
        <name>phosphate</name>
        <dbReference type="ChEBI" id="CHEBI:43474"/>
        <note>substrate</note>
    </ligand>
</feature>
<comment type="function">
    <text evidence="1">Phosphorolytic 3'-5' exoribonuclease that plays an important role in tRNA 3'-end maturation. Removes nucleotide residues following the 3'-CCA terminus of tRNAs; can also add nucleotides to the ends of RNA molecules by using nucleoside diphosphates as substrates, but this may not be physiologically important. Probably plays a role in initiation of 16S rRNA degradation (leading to ribosome degradation) during starvation.</text>
</comment>
<comment type="catalytic activity">
    <reaction evidence="1">
        <text>tRNA(n+1) + phosphate = tRNA(n) + a ribonucleoside 5'-diphosphate</text>
        <dbReference type="Rhea" id="RHEA:10628"/>
        <dbReference type="Rhea" id="RHEA-COMP:17343"/>
        <dbReference type="Rhea" id="RHEA-COMP:17344"/>
        <dbReference type="ChEBI" id="CHEBI:43474"/>
        <dbReference type="ChEBI" id="CHEBI:57930"/>
        <dbReference type="ChEBI" id="CHEBI:173114"/>
        <dbReference type="EC" id="2.7.7.56"/>
    </reaction>
</comment>
<comment type="subunit">
    <text evidence="1">Homohexameric ring arranged as a trimer of dimers.</text>
</comment>
<comment type="similarity">
    <text evidence="1">Belongs to the RNase PH family.</text>
</comment>
<dbReference type="EC" id="2.7.7.56" evidence="1"/>
<dbReference type="EMBL" id="CP001407">
    <property type="protein sequence ID" value="ACO30695.1"/>
    <property type="molecule type" value="Genomic_DNA"/>
</dbReference>
<dbReference type="RefSeq" id="WP_001261764.1">
    <property type="nucleotide sequence ID" value="NZ_CP009318.1"/>
</dbReference>
<dbReference type="SMR" id="C1ETS9"/>
<dbReference type="GeneID" id="45024354"/>
<dbReference type="KEGG" id="bcx:BCA_4596"/>
<dbReference type="PATRIC" id="fig|572264.18.peg.4544"/>
<dbReference type="Proteomes" id="UP000002210">
    <property type="component" value="Chromosome"/>
</dbReference>
<dbReference type="GO" id="GO:0000175">
    <property type="term" value="F:3'-5'-RNA exonuclease activity"/>
    <property type="evidence" value="ECO:0007669"/>
    <property type="project" value="UniProtKB-UniRule"/>
</dbReference>
<dbReference type="GO" id="GO:0000049">
    <property type="term" value="F:tRNA binding"/>
    <property type="evidence" value="ECO:0007669"/>
    <property type="project" value="UniProtKB-UniRule"/>
</dbReference>
<dbReference type="GO" id="GO:0009022">
    <property type="term" value="F:tRNA nucleotidyltransferase activity"/>
    <property type="evidence" value="ECO:0007669"/>
    <property type="project" value="UniProtKB-UniRule"/>
</dbReference>
<dbReference type="GO" id="GO:0016075">
    <property type="term" value="P:rRNA catabolic process"/>
    <property type="evidence" value="ECO:0007669"/>
    <property type="project" value="UniProtKB-UniRule"/>
</dbReference>
<dbReference type="GO" id="GO:0006364">
    <property type="term" value="P:rRNA processing"/>
    <property type="evidence" value="ECO:0007669"/>
    <property type="project" value="UniProtKB-KW"/>
</dbReference>
<dbReference type="GO" id="GO:0008033">
    <property type="term" value="P:tRNA processing"/>
    <property type="evidence" value="ECO:0007669"/>
    <property type="project" value="UniProtKB-UniRule"/>
</dbReference>
<dbReference type="CDD" id="cd11362">
    <property type="entry name" value="RNase_PH_bact"/>
    <property type="match status" value="1"/>
</dbReference>
<dbReference type="FunFam" id="3.30.230.70:FF:000003">
    <property type="entry name" value="Ribonuclease PH"/>
    <property type="match status" value="1"/>
</dbReference>
<dbReference type="Gene3D" id="3.30.230.70">
    <property type="entry name" value="GHMP Kinase, N-terminal domain"/>
    <property type="match status" value="1"/>
</dbReference>
<dbReference type="HAMAP" id="MF_00564">
    <property type="entry name" value="RNase_PH"/>
    <property type="match status" value="1"/>
</dbReference>
<dbReference type="InterPro" id="IPR001247">
    <property type="entry name" value="ExoRNase_PH_dom1"/>
</dbReference>
<dbReference type="InterPro" id="IPR015847">
    <property type="entry name" value="ExoRNase_PH_dom2"/>
</dbReference>
<dbReference type="InterPro" id="IPR036345">
    <property type="entry name" value="ExoRNase_PH_dom2_sf"/>
</dbReference>
<dbReference type="InterPro" id="IPR027408">
    <property type="entry name" value="PNPase/RNase_PH_dom_sf"/>
</dbReference>
<dbReference type="InterPro" id="IPR020568">
    <property type="entry name" value="Ribosomal_Su5_D2-typ_SF"/>
</dbReference>
<dbReference type="InterPro" id="IPR050080">
    <property type="entry name" value="RNase_PH"/>
</dbReference>
<dbReference type="InterPro" id="IPR002381">
    <property type="entry name" value="RNase_PH_bac-type"/>
</dbReference>
<dbReference type="InterPro" id="IPR018336">
    <property type="entry name" value="RNase_PH_CS"/>
</dbReference>
<dbReference type="NCBIfam" id="TIGR01966">
    <property type="entry name" value="RNasePH"/>
    <property type="match status" value="1"/>
</dbReference>
<dbReference type="PANTHER" id="PTHR11953">
    <property type="entry name" value="EXOSOME COMPLEX COMPONENT"/>
    <property type="match status" value="1"/>
</dbReference>
<dbReference type="PANTHER" id="PTHR11953:SF0">
    <property type="entry name" value="EXOSOME COMPLEX COMPONENT RRP41"/>
    <property type="match status" value="1"/>
</dbReference>
<dbReference type="Pfam" id="PF01138">
    <property type="entry name" value="RNase_PH"/>
    <property type="match status" value="1"/>
</dbReference>
<dbReference type="Pfam" id="PF03725">
    <property type="entry name" value="RNase_PH_C"/>
    <property type="match status" value="1"/>
</dbReference>
<dbReference type="SUPFAM" id="SSF55666">
    <property type="entry name" value="Ribonuclease PH domain 2-like"/>
    <property type="match status" value="1"/>
</dbReference>
<dbReference type="SUPFAM" id="SSF54211">
    <property type="entry name" value="Ribosomal protein S5 domain 2-like"/>
    <property type="match status" value="1"/>
</dbReference>
<dbReference type="PROSITE" id="PS01277">
    <property type="entry name" value="RIBONUCLEASE_PH"/>
    <property type="match status" value="1"/>
</dbReference>
<reference key="1">
    <citation type="submission" date="2009-02" db="EMBL/GenBank/DDBJ databases">
        <title>Genome sequence of Bacillus cereus 03BB102.</title>
        <authorList>
            <person name="Dodson R.J."/>
            <person name="Jackson P."/>
            <person name="Munk A.C."/>
            <person name="Brettin T."/>
            <person name="Bruce D."/>
            <person name="Detter C."/>
            <person name="Tapia R."/>
            <person name="Han C."/>
            <person name="Sutton G."/>
            <person name="Sims D."/>
        </authorList>
    </citation>
    <scope>NUCLEOTIDE SEQUENCE [LARGE SCALE GENOMIC DNA]</scope>
    <source>
        <strain>03BB102</strain>
    </source>
</reference>
<gene>
    <name evidence="1" type="primary">rph</name>
    <name type="ordered locus">BCA_4596</name>
</gene>
<organism>
    <name type="scientific">Bacillus cereus (strain 03BB102)</name>
    <dbReference type="NCBI Taxonomy" id="572264"/>
    <lineage>
        <taxon>Bacteria</taxon>
        <taxon>Bacillati</taxon>
        <taxon>Bacillota</taxon>
        <taxon>Bacilli</taxon>
        <taxon>Bacillales</taxon>
        <taxon>Bacillaceae</taxon>
        <taxon>Bacillus</taxon>
        <taxon>Bacillus cereus group</taxon>
    </lineage>
</organism>
<protein>
    <recommendedName>
        <fullName evidence="1">Ribonuclease PH</fullName>
        <shortName evidence="1">RNase PH</shortName>
        <ecNumber evidence="1">2.7.7.56</ecNumber>
    </recommendedName>
    <alternativeName>
        <fullName evidence="1">tRNA nucleotidyltransferase</fullName>
    </alternativeName>
</protein>
<accession>C1ETS9</accession>
<keyword id="KW-0548">Nucleotidyltransferase</keyword>
<keyword id="KW-0694">RNA-binding</keyword>
<keyword id="KW-0698">rRNA processing</keyword>
<keyword id="KW-0808">Transferase</keyword>
<keyword id="KW-0819">tRNA processing</keyword>
<keyword id="KW-0820">tRNA-binding</keyword>
<proteinExistence type="inferred from homology"/>
<evidence type="ECO:0000255" key="1">
    <source>
        <dbReference type="HAMAP-Rule" id="MF_00564"/>
    </source>
</evidence>